<comment type="function">
    <text evidence="1">Catalyzes the dehydration of methylthioribulose-1-phosphate (MTRu-1-P) into 2,3-diketo-5-methylthiopentyl-1-phosphate (DK-MTP-1-P).</text>
</comment>
<comment type="catalytic activity">
    <reaction evidence="1">
        <text>5-(methylsulfanyl)-D-ribulose 1-phosphate = 5-methylsulfanyl-2,3-dioxopentyl phosphate + H2O</text>
        <dbReference type="Rhea" id="RHEA:15549"/>
        <dbReference type="ChEBI" id="CHEBI:15377"/>
        <dbReference type="ChEBI" id="CHEBI:58548"/>
        <dbReference type="ChEBI" id="CHEBI:58828"/>
        <dbReference type="EC" id="4.2.1.109"/>
    </reaction>
</comment>
<comment type="cofactor">
    <cofactor evidence="1">
        <name>Zn(2+)</name>
        <dbReference type="ChEBI" id="CHEBI:29105"/>
    </cofactor>
    <text evidence="1">Binds 1 zinc ion per subunit.</text>
</comment>
<comment type="pathway">
    <text evidence="1">Amino-acid biosynthesis; L-methionine biosynthesis via salvage pathway; L-methionine from S-methyl-5-thio-alpha-D-ribose 1-phosphate: step 2/6.</text>
</comment>
<comment type="similarity">
    <text evidence="1">Belongs to the aldolase class II family. MtnB subfamily.</text>
</comment>
<sequence length="217" mass="24252">MNATTAPLPYSAARLHELAQLLIGNIRELAQAGWTPATSSNFSHRLDEQHAAITVSGRDKGRLVEEDIMVVDFDGQPVGRPLRPSAETLLHTQLYRRFPEIGCVLHTHSPVQTIASRLYAGSGVIRLEGYELLKAFEGNTTHETAVDVPVFANTQDMQVLAAQVEALLDKQSMWGYLIEGHGLYAWGRNMAEARRHLEAFEFLLHCELELLKLRSPR</sequence>
<feature type="chain" id="PRO_0000357111" description="Methylthioribulose-1-phosphate dehydratase">
    <location>
        <begin position="1"/>
        <end position="217"/>
    </location>
</feature>
<feature type="binding site" evidence="1">
    <location>
        <position position="106"/>
    </location>
    <ligand>
        <name>Zn(2+)</name>
        <dbReference type="ChEBI" id="CHEBI:29105"/>
    </ligand>
</feature>
<feature type="binding site" evidence="1">
    <location>
        <position position="108"/>
    </location>
    <ligand>
        <name>Zn(2+)</name>
        <dbReference type="ChEBI" id="CHEBI:29105"/>
    </ligand>
</feature>
<organism>
    <name type="scientific">Xanthomonas campestris pv. campestris (strain ATCC 33913 / DSM 3586 / NCPPB 528 / LMG 568 / P 25)</name>
    <dbReference type="NCBI Taxonomy" id="190485"/>
    <lineage>
        <taxon>Bacteria</taxon>
        <taxon>Pseudomonadati</taxon>
        <taxon>Pseudomonadota</taxon>
        <taxon>Gammaproteobacteria</taxon>
        <taxon>Lysobacterales</taxon>
        <taxon>Lysobacteraceae</taxon>
        <taxon>Xanthomonas</taxon>
    </lineage>
</organism>
<evidence type="ECO:0000255" key="1">
    <source>
        <dbReference type="HAMAP-Rule" id="MF_01677"/>
    </source>
</evidence>
<name>MTNB_XANCP</name>
<proteinExistence type="inferred from homology"/>
<reference key="1">
    <citation type="journal article" date="2002" name="Nature">
        <title>Comparison of the genomes of two Xanthomonas pathogens with differing host specificities.</title>
        <authorList>
            <person name="da Silva A.C.R."/>
            <person name="Ferro J.A."/>
            <person name="Reinach F.C."/>
            <person name="Farah C.S."/>
            <person name="Furlan L.R."/>
            <person name="Quaggio R.B."/>
            <person name="Monteiro-Vitorello C.B."/>
            <person name="Van Sluys M.A."/>
            <person name="Almeida N.F. Jr."/>
            <person name="Alves L.M.C."/>
            <person name="do Amaral A.M."/>
            <person name="Bertolini M.C."/>
            <person name="Camargo L.E.A."/>
            <person name="Camarotte G."/>
            <person name="Cannavan F."/>
            <person name="Cardozo J."/>
            <person name="Chambergo F."/>
            <person name="Ciapina L.P."/>
            <person name="Cicarelli R.M.B."/>
            <person name="Coutinho L.L."/>
            <person name="Cursino-Santos J.R."/>
            <person name="El-Dorry H."/>
            <person name="Faria J.B."/>
            <person name="Ferreira A.J.S."/>
            <person name="Ferreira R.C.C."/>
            <person name="Ferro M.I.T."/>
            <person name="Formighieri E.F."/>
            <person name="Franco M.C."/>
            <person name="Greggio C.C."/>
            <person name="Gruber A."/>
            <person name="Katsuyama A.M."/>
            <person name="Kishi L.T."/>
            <person name="Leite R.P."/>
            <person name="Lemos E.G.M."/>
            <person name="Lemos M.V.F."/>
            <person name="Locali E.C."/>
            <person name="Machado M.A."/>
            <person name="Madeira A.M.B.N."/>
            <person name="Martinez-Rossi N.M."/>
            <person name="Martins E.C."/>
            <person name="Meidanis J."/>
            <person name="Menck C.F.M."/>
            <person name="Miyaki C.Y."/>
            <person name="Moon D.H."/>
            <person name="Moreira L.M."/>
            <person name="Novo M.T.M."/>
            <person name="Okura V.K."/>
            <person name="Oliveira M.C."/>
            <person name="Oliveira V.R."/>
            <person name="Pereira H.A."/>
            <person name="Rossi A."/>
            <person name="Sena J.A.D."/>
            <person name="Silva C."/>
            <person name="de Souza R.F."/>
            <person name="Spinola L.A.F."/>
            <person name="Takita M.A."/>
            <person name="Tamura R.E."/>
            <person name="Teixeira E.C."/>
            <person name="Tezza R.I.D."/>
            <person name="Trindade dos Santos M."/>
            <person name="Truffi D."/>
            <person name="Tsai S.M."/>
            <person name="White F.F."/>
            <person name="Setubal J.C."/>
            <person name="Kitajima J.P."/>
        </authorList>
    </citation>
    <scope>NUCLEOTIDE SEQUENCE [LARGE SCALE GENOMIC DNA]</scope>
    <source>
        <strain>ATCC 33913 / DSM 3586 / NCPPB 528 / LMG 568 / P 25</strain>
    </source>
</reference>
<accession>Q8P9N3</accession>
<protein>
    <recommendedName>
        <fullName evidence="1">Methylthioribulose-1-phosphate dehydratase</fullName>
        <shortName evidence="1">MTRu-1-P dehydratase</shortName>
        <ecNumber evidence="1">4.2.1.109</ecNumber>
    </recommendedName>
</protein>
<dbReference type="EC" id="4.2.1.109" evidence="1"/>
<dbReference type="EMBL" id="AE008922">
    <property type="protein sequence ID" value="AAM41109.1"/>
    <property type="molecule type" value="Genomic_DNA"/>
</dbReference>
<dbReference type="RefSeq" id="NP_637185.1">
    <property type="nucleotide sequence ID" value="NC_003902.1"/>
</dbReference>
<dbReference type="RefSeq" id="WP_011036990.1">
    <property type="nucleotide sequence ID" value="NC_003902.1"/>
</dbReference>
<dbReference type="SMR" id="Q8P9N3"/>
<dbReference type="STRING" id="190485.XCC1820"/>
<dbReference type="EnsemblBacteria" id="AAM41109">
    <property type="protein sequence ID" value="AAM41109"/>
    <property type="gene ID" value="XCC1820"/>
</dbReference>
<dbReference type="KEGG" id="xcc:XCC1820"/>
<dbReference type="PATRIC" id="fig|190485.4.peg.1941"/>
<dbReference type="eggNOG" id="COG0235">
    <property type="taxonomic scope" value="Bacteria"/>
</dbReference>
<dbReference type="HOGENOM" id="CLU_006033_4_1_6"/>
<dbReference type="OrthoDB" id="9805559at2"/>
<dbReference type="UniPathway" id="UPA00904">
    <property type="reaction ID" value="UER00875"/>
</dbReference>
<dbReference type="Proteomes" id="UP000001010">
    <property type="component" value="Chromosome"/>
</dbReference>
<dbReference type="GO" id="GO:0005737">
    <property type="term" value="C:cytoplasm"/>
    <property type="evidence" value="ECO:0000318"/>
    <property type="project" value="GO_Central"/>
</dbReference>
<dbReference type="GO" id="GO:0046570">
    <property type="term" value="F:methylthioribulose 1-phosphate dehydratase activity"/>
    <property type="evidence" value="ECO:0000318"/>
    <property type="project" value="GO_Central"/>
</dbReference>
<dbReference type="GO" id="GO:0008270">
    <property type="term" value="F:zinc ion binding"/>
    <property type="evidence" value="ECO:0007669"/>
    <property type="project" value="UniProtKB-UniRule"/>
</dbReference>
<dbReference type="GO" id="GO:0019509">
    <property type="term" value="P:L-methionine salvage from methylthioadenosine"/>
    <property type="evidence" value="ECO:0000318"/>
    <property type="project" value="GO_Central"/>
</dbReference>
<dbReference type="GO" id="GO:0005996">
    <property type="term" value="P:monosaccharide metabolic process"/>
    <property type="evidence" value="ECO:0007669"/>
    <property type="project" value="UniProtKB-ARBA"/>
</dbReference>
<dbReference type="FunFam" id="3.40.225.10:FF:000007">
    <property type="entry name" value="Methylthioribulose-1-phosphate dehydratase"/>
    <property type="match status" value="1"/>
</dbReference>
<dbReference type="Gene3D" id="3.40.225.10">
    <property type="entry name" value="Class II aldolase/adducin N-terminal domain"/>
    <property type="match status" value="1"/>
</dbReference>
<dbReference type="HAMAP" id="MF_01677">
    <property type="entry name" value="Salvage_MtnB"/>
    <property type="match status" value="1"/>
</dbReference>
<dbReference type="InterPro" id="IPR001303">
    <property type="entry name" value="Aldolase_II/adducin_N"/>
</dbReference>
<dbReference type="InterPro" id="IPR036409">
    <property type="entry name" value="Aldolase_II/adducin_N_sf"/>
</dbReference>
<dbReference type="InterPro" id="IPR017714">
    <property type="entry name" value="MethylthioRu-1-P_deHdtase_MtnB"/>
</dbReference>
<dbReference type="NCBIfam" id="NF006672">
    <property type="entry name" value="PRK09220.1"/>
    <property type="match status" value="1"/>
</dbReference>
<dbReference type="NCBIfam" id="TIGR03328">
    <property type="entry name" value="salvage_mtnB"/>
    <property type="match status" value="1"/>
</dbReference>
<dbReference type="PANTHER" id="PTHR10640">
    <property type="entry name" value="METHYLTHIORIBULOSE-1-PHOSPHATE DEHYDRATASE"/>
    <property type="match status" value="1"/>
</dbReference>
<dbReference type="PANTHER" id="PTHR10640:SF7">
    <property type="entry name" value="METHYLTHIORIBULOSE-1-PHOSPHATE DEHYDRATASE"/>
    <property type="match status" value="1"/>
</dbReference>
<dbReference type="Pfam" id="PF00596">
    <property type="entry name" value="Aldolase_II"/>
    <property type="match status" value="1"/>
</dbReference>
<dbReference type="SMART" id="SM01007">
    <property type="entry name" value="Aldolase_II"/>
    <property type="match status" value="1"/>
</dbReference>
<dbReference type="SUPFAM" id="SSF53639">
    <property type="entry name" value="AraD/HMP-PK domain-like"/>
    <property type="match status" value="1"/>
</dbReference>
<gene>
    <name evidence="1" type="primary">mtnB</name>
    <name type="ordered locus">XCC1820</name>
</gene>
<keyword id="KW-0028">Amino-acid biosynthesis</keyword>
<keyword id="KW-0456">Lyase</keyword>
<keyword id="KW-0479">Metal-binding</keyword>
<keyword id="KW-0486">Methionine biosynthesis</keyword>
<keyword id="KW-1185">Reference proteome</keyword>
<keyword id="KW-0862">Zinc</keyword>